<accession>Q1H0P3</accession>
<sequence>MVIKPRVRGFICVTAHPTGCEVNVKQQIDYVKAQGPFHGPKRVLVIGASTGYGLAARISAAFASGAATVGVFLERPGEGNKPGTAGWYNSAAFHKFAEAEGLYASSVNGDAFSDAVKQQTIDIIKRDLGQVDLVVYSLAAPRRTHPKTGQVYNSTLKPIGKTLRQRGLDTDKEVIKENVIEPATEEEIANTVAVMGGEDWQMWIEALDQAGVLADGAKTTAFTYLGEKITHDIYWNGTIGAAKKDLDQRVLKIREQLAARGGDARVAVLKALVTQASSAIPMMPLYLSLLFKVMKKAGTHEGCIEQVDGLYRDSLYNDHPIMDEEGRLRADYKELAPDIQAEVAALWDQVTDENLYELTDFKGYKSDFLRLFGFGVEGVDYEADVNPEVPIRNLTQV</sequence>
<name>FABV_METFK</name>
<keyword id="KW-0275">Fatty acid biosynthesis</keyword>
<keyword id="KW-0276">Fatty acid metabolism</keyword>
<keyword id="KW-0444">Lipid biosynthesis</keyword>
<keyword id="KW-0443">Lipid metabolism</keyword>
<keyword id="KW-0520">NAD</keyword>
<keyword id="KW-0560">Oxidoreductase</keyword>
<keyword id="KW-1185">Reference proteome</keyword>
<protein>
    <recommendedName>
        <fullName evidence="1">Enoyl-[acyl-carrier-protein] reductase [NADH]</fullName>
        <shortName evidence="1">ENR</shortName>
        <ecNumber evidence="1">1.3.1.9</ecNumber>
    </recommendedName>
</protein>
<evidence type="ECO:0000255" key="1">
    <source>
        <dbReference type="HAMAP-Rule" id="MF_01838"/>
    </source>
</evidence>
<reference key="1">
    <citation type="submission" date="2006-03" db="EMBL/GenBank/DDBJ databases">
        <title>Complete sequence of Methylobacillus flagellatus KT.</title>
        <authorList>
            <consortium name="US DOE Joint Genome Institute"/>
            <person name="Copeland A."/>
            <person name="Lucas S."/>
            <person name="Lapidus A."/>
            <person name="Barry K."/>
            <person name="Detter J.C."/>
            <person name="Glavina del Rio T."/>
            <person name="Hammon N."/>
            <person name="Israni S."/>
            <person name="Dalin E."/>
            <person name="Tice H."/>
            <person name="Pitluck S."/>
            <person name="Brettin T."/>
            <person name="Bruce D."/>
            <person name="Han C."/>
            <person name="Tapia R."/>
            <person name="Saunders E."/>
            <person name="Gilna P."/>
            <person name="Schmutz J."/>
            <person name="Larimer F."/>
            <person name="Land M."/>
            <person name="Kyrpides N."/>
            <person name="Anderson I."/>
            <person name="Richardson P."/>
        </authorList>
    </citation>
    <scope>NUCLEOTIDE SEQUENCE [LARGE SCALE GENOMIC DNA]</scope>
    <source>
        <strain>ATCC 51484 / DSM 6875 / VKM B-1610 / KT</strain>
    </source>
</reference>
<feature type="chain" id="PRO_1000070485" description="Enoyl-[acyl-carrier-protein] reductase [NADH]">
    <location>
        <begin position="1"/>
        <end position="397"/>
    </location>
</feature>
<feature type="active site" description="Proton donor" evidence="1">
    <location>
        <position position="234"/>
    </location>
</feature>
<feature type="binding site" evidence="1">
    <location>
        <begin position="47"/>
        <end position="52"/>
    </location>
    <ligand>
        <name>NAD(+)</name>
        <dbReference type="ChEBI" id="CHEBI:57540"/>
    </ligand>
</feature>
<feature type="binding site" evidence="1">
    <location>
        <begin position="73"/>
        <end position="74"/>
    </location>
    <ligand>
        <name>NAD(+)</name>
        <dbReference type="ChEBI" id="CHEBI:57540"/>
    </ligand>
</feature>
<feature type="binding site" evidence="1">
    <location>
        <begin position="110"/>
        <end position="111"/>
    </location>
    <ligand>
        <name>NAD(+)</name>
        <dbReference type="ChEBI" id="CHEBI:57540"/>
    </ligand>
</feature>
<feature type="binding site" evidence="1">
    <location>
        <begin position="138"/>
        <end position="139"/>
    </location>
    <ligand>
        <name>NAD(+)</name>
        <dbReference type="ChEBI" id="CHEBI:57540"/>
    </ligand>
</feature>
<feature type="binding site" evidence="1">
    <location>
        <position position="224"/>
    </location>
    <ligand>
        <name>substrate</name>
    </ligand>
</feature>
<feature type="binding site" evidence="1">
    <location>
        <position position="243"/>
    </location>
    <ligand>
        <name>NAD(+)</name>
        <dbReference type="ChEBI" id="CHEBI:57540"/>
    </ligand>
</feature>
<feature type="binding site" evidence="1">
    <location>
        <begin position="272"/>
        <end position="274"/>
    </location>
    <ligand>
        <name>NAD(+)</name>
        <dbReference type="ChEBI" id="CHEBI:57540"/>
    </ligand>
</feature>
<feature type="site" description="Plays an important role in discriminating NADH against NADPH" evidence="1">
    <location>
        <position position="74"/>
    </location>
</feature>
<comment type="function">
    <text evidence="1">Involved in the final reduction of the elongation cycle of fatty acid synthesis (FAS II). Catalyzes the reduction of a carbon-carbon double bond in an enoyl moiety that is covalently linked to an acyl carrier protein (ACP).</text>
</comment>
<comment type="catalytic activity">
    <reaction evidence="1">
        <text>a 2,3-saturated acyl-[ACP] + NAD(+) = a (2E)-enoyl-[ACP] + NADH + H(+)</text>
        <dbReference type="Rhea" id="RHEA:10240"/>
        <dbReference type="Rhea" id="RHEA-COMP:9925"/>
        <dbReference type="Rhea" id="RHEA-COMP:9926"/>
        <dbReference type="ChEBI" id="CHEBI:15378"/>
        <dbReference type="ChEBI" id="CHEBI:57540"/>
        <dbReference type="ChEBI" id="CHEBI:57945"/>
        <dbReference type="ChEBI" id="CHEBI:78784"/>
        <dbReference type="ChEBI" id="CHEBI:78785"/>
        <dbReference type="EC" id="1.3.1.9"/>
    </reaction>
</comment>
<comment type="pathway">
    <text evidence="1">Lipid metabolism; fatty acid biosynthesis.</text>
</comment>
<comment type="subunit">
    <text evidence="1">Monomer.</text>
</comment>
<comment type="similarity">
    <text evidence="1">Belongs to the TER reductase family.</text>
</comment>
<proteinExistence type="inferred from homology"/>
<gene>
    <name evidence="1" type="primary">fabV</name>
    <name type="ordered locus">Mfla_1676</name>
</gene>
<dbReference type="EC" id="1.3.1.9" evidence="1"/>
<dbReference type="EMBL" id="CP000284">
    <property type="protein sequence ID" value="ABE49944.1"/>
    <property type="molecule type" value="Genomic_DNA"/>
</dbReference>
<dbReference type="RefSeq" id="WP_011479898.1">
    <property type="nucleotide sequence ID" value="NC_007947.1"/>
</dbReference>
<dbReference type="SMR" id="Q1H0P3"/>
<dbReference type="STRING" id="265072.Mfla_1676"/>
<dbReference type="KEGG" id="mfa:Mfla_1676"/>
<dbReference type="eggNOG" id="COG3007">
    <property type="taxonomic scope" value="Bacteria"/>
</dbReference>
<dbReference type="HOGENOM" id="CLU_057698_1_0_4"/>
<dbReference type="OrthoDB" id="9802260at2"/>
<dbReference type="UniPathway" id="UPA00094"/>
<dbReference type="Proteomes" id="UP000002440">
    <property type="component" value="Chromosome"/>
</dbReference>
<dbReference type="GO" id="GO:0004318">
    <property type="term" value="F:enoyl-[acyl-carrier-protein] reductase (NADH) activity"/>
    <property type="evidence" value="ECO:0007669"/>
    <property type="project" value="UniProtKB-UniRule"/>
</dbReference>
<dbReference type="GO" id="GO:0051287">
    <property type="term" value="F:NAD binding"/>
    <property type="evidence" value="ECO:0007669"/>
    <property type="project" value="UniProtKB-UniRule"/>
</dbReference>
<dbReference type="GO" id="GO:0050343">
    <property type="term" value="F:trans-2-enoyl-CoA reductase (NADH) activity"/>
    <property type="evidence" value="ECO:0007669"/>
    <property type="project" value="TreeGrafter"/>
</dbReference>
<dbReference type="GO" id="GO:0006633">
    <property type="term" value="P:fatty acid biosynthetic process"/>
    <property type="evidence" value="ECO:0007669"/>
    <property type="project" value="UniProtKB-UniRule"/>
</dbReference>
<dbReference type="FunFam" id="3.40.50.720:FF:000221">
    <property type="entry name" value="Enoyl-[acyl-carrier-protein] reductase [NADH]"/>
    <property type="match status" value="1"/>
</dbReference>
<dbReference type="Gene3D" id="3.40.50.720">
    <property type="entry name" value="NAD(P)-binding Rossmann-like Domain"/>
    <property type="match status" value="1"/>
</dbReference>
<dbReference type="HAMAP" id="MF_01838">
    <property type="entry name" value="FabV_reductase"/>
    <property type="match status" value="1"/>
</dbReference>
<dbReference type="InterPro" id="IPR024906">
    <property type="entry name" value="Eno_Rdtase_FAD-bd_dom"/>
</dbReference>
<dbReference type="InterPro" id="IPR024910">
    <property type="entry name" value="Enoyl-CoA_Rdtase_cat_dom"/>
</dbReference>
<dbReference type="InterPro" id="IPR050048">
    <property type="entry name" value="FabV-like_NADH_b"/>
</dbReference>
<dbReference type="InterPro" id="IPR010758">
    <property type="entry name" value="Trans-2-enoyl-CoA_reductase"/>
</dbReference>
<dbReference type="NCBIfam" id="NF043048">
    <property type="entry name" value="EnoyACPredFabV"/>
    <property type="match status" value="1"/>
</dbReference>
<dbReference type="NCBIfam" id="NF010177">
    <property type="entry name" value="PRK13656.1"/>
    <property type="match status" value="1"/>
</dbReference>
<dbReference type="PANTHER" id="PTHR37480">
    <property type="entry name" value="ENOYL-[ACYL-CARRIER-PROTEIN] REDUCTASE [NADH]"/>
    <property type="match status" value="1"/>
</dbReference>
<dbReference type="PANTHER" id="PTHR37480:SF1">
    <property type="entry name" value="ENOYL-[ACYL-CARRIER-PROTEIN] REDUCTASE [NADH]"/>
    <property type="match status" value="1"/>
</dbReference>
<dbReference type="Pfam" id="PF07055">
    <property type="entry name" value="Eno-Rase_FAD_bd"/>
    <property type="match status" value="1"/>
</dbReference>
<dbReference type="Pfam" id="PF12242">
    <property type="entry name" value="Eno-Rase_NADH_b"/>
    <property type="match status" value="1"/>
</dbReference>
<dbReference type="Pfam" id="PF12241">
    <property type="entry name" value="Enoyl_reductase"/>
    <property type="match status" value="1"/>
</dbReference>
<organism>
    <name type="scientific">Methylobacillus flagellatus (strain ATCC 51484 / DSM 6875 / VKM B-1610 / KT)</name>
    <dbReference type="NCBI Taxonomy" id="265072"/>
    <lineage>
        <taxon>Bacteria</taxon>
        <taxon>Pseudomonadati</taxon>
        <taxon>Pseudomonadota</taxon>
        <taxon>Betaproteobacteria</taxon>
        <taxon>Nitrosomonadales</taxon>
        <taxon>Methylophilaceae</taxon>
        <taxon>Methylobacillus</taxon>
    </lineage>
</organism>